<keyword id="KW-0150">Chloroplast</keyword>
<keyword id="KW-0934">Plastid</keyword>
<keyword id="KW-0687">Ribonucleoprotein</keyword>
<keyword id="KW-0689">Ribosomal protein</keyword>
<protein>
    <recommendedName>
        <fullName evidence="2">Large ribosomal subunit protein uL2c</fullName>
    </recommendedName>
    <alternativeName>
        <fullName evidence="4">50S ribosomal protein L2, chloroplastic</fullName>
    </alternativeName>
</protein>
<name>RK2_OLTVI</name>
<proteinExistence type="inferred from homology"/>
<sequence>MGIRFYKANTPGTRNRSVSDFSEITHSKPEKSLTFNVQRAKGRNNRGVITSRHRGGGHKRLYRLIDFKRNKIGIAAKVATIEYDPNRNARIALLHYQDGEKRYILHPRGLNVGSSIISSLNAPVLTGNALPLKNIPLGGEVHNVELQPGAGGQLARAAGAVAQIVAKEGNLVTLRLPSGEVRLVSNECWATVGQVGNTDAINMVVGKAGRKRWLGKRPHVRGVVMNPCDHPHGGGEGRSPIGRPRPVSPWGKPALGQRTRKGHKYSDQMILRRRK</sequence>
<gene>
    <name type="primary">rpl2</name>
</gene>
<feature type="chain" id="PRO_0000237282" description="Large ribosomal subunit protein uL2c">
    <location>
        <begin position="1"/>
        <end position="275"/>
    </location>
</feature>
<feature type="region of interest" description="Disordered" evidence="3">
    <location>
        <begin position="225"/>
        <end position="275"/>
    </location>
</feature>
<geneLocation type="chloroplast"/>
<evidence type="ECO:0000250" key="1"/>
<evidence type="ECO:0000255" key="2">
    <source>
        <dbReference type="HAMAP-Rule" id="MF_01320"/>
    </source>
</evidence>
<evidence type="ECO:0000256" key="3">
    <source>
        <dbReference type="SAM" id="MobiDB-lite"/>
    </source>
</evidence>
<evidence type="ECO:0000305" key="4"/>
<accession>Q20F12</accession>
<dbReference type="EMBL" id="DQ291132">
    <property type="protein sequence ID" value="ABB81994.1"/>
    <property type="molecule type" value="Genomic_DNA"/>
</dbReference>
<dbReference type="RefSeq" id="YP_635833.1">
    <property type="nucleotide sequence ID" value="NC_008099.1"/>
</dbReference>
<dbReference type="SMR" id="Q20F12"/>
<dbReference type="GeneID" id="4100170"/>
<dbReference type="GO" id="GO:0009507">
    <property type="term" value="C:chloroplast"/>
    <property type="evidence" value="ECO:0007669"/>
    <property type="project" value="UniProtKB-SubCell"/>
</dbReference>
<dbReference type="GO" id="GO:0005762">
    <property type="term" value="C:mitochondrial large ribosomal subunit"/>
    <property type="evidence" value="ECO:0007669"/>
    <property type="project" value="TreeGrafter"/>
</dbReference>
<dbReference type="GO" id="GO:0019843">
    <property type="term" value="F:rRNA binding"/>
    <property type="evidence" value="ECO:0007669"/>
    <property type="project" value="UniProtKB-UniRule"/>
</dbReference>
<dbReference type="GO" id="GO:0003735">
    <property type="term" value="F:structural constituent of ribosome"/>
    <property type="evidence" value="ECO:0007669"/>
    <property type="project" value="InterPro"/>
</dbReference>
<dbReference type="GO" id="GO:0016740">
    <property type="term" value="F:transferase activity"/>
    <property type="evidence" value="ECO:0007669"/>
    <property type="project" value="InterPro"/>
</dbReference>
<dbReference type="GO" id="GO:0032543">
    <property type="term" value="P:mitochondrial translation"/>
    <property type="evidence" value="ECO:0007669"/>
    <property type="project" value="TreeGrafter"/>
</dbReference>
<dbReference type="FunFam" id="2.30.30.30:FF:000001">
    <property type="entry name" value="50S ribosomal protein L2"/>
    <property type="match status" value="1"/>
</dbReference>
<dbReference type="FunFam" id="2.40.50.140:FF:000003">
    <property type="entry name" value="50S ribosomal protein L2"/>
    <property type="match status" value="1"/>
</dbReference>
<dbReference type="FunFam" id="4.10.950.10:FF:000001">
    <property type="entry name" value="50S ribosomal protein L2"/>
    <property type="match status" value="1"/>
</dbReference>
<dbReference type="Gene3D" id="2.30.30.30">
    <property type="match status" value="1"/>
</dbReference>
<dbReference type="Gene3D" id="2.40.50.140">
    <property type="entry name" value="Nucleic acid-binding proteins"/>
    <property type="match status" value="1"/>
</dbReference>
<dbReference type="Gene3D" id="4.10.950.10">
    <property type="entry name" value="Ribosomal protein L2, domain 3"/>
    <property type="match status" value="1"/>
</dbReference>
<dbReference type="HAMAP" id="MF_01320_B">
    <property type="entry name" value="Ribosomal_uL2_B"/>
    <property type="match status" value="1"/>
</dbReference>
<dbReference type="InterPro" id="IPR012340">
    <property type="entry name" value="NA-bd_OB-fold"/>
</dbReference>
<dbReference type="InterPro" id="IPR014722">
    <property type="entry name" value="Rib_uL2_dom2"/>
</dbReference>
<dbReference type="InterPro" id="IPR002171">
    <property type="entry name" value="Ribosomal_uL2"/>
</dbReference>
<dbReference type="InterPro" id="IPR005880">
    <property type="entry name" value="Ribosomal_uL2_bac/org-type"/>
</dbReference>
<dbReference type="InterPro" id="IPR022669">
    <property type="entry name" value="Ribosomal_uL2_C"/>
</dbReference>
<dbReference type="InterPro" id="IPR022671">
    <property type="entry name" value="Ribosomal_uL2_CS"/>
</dbReference>
<dbReference type="InterPro" id="IPR014726">
    <property type="entry name" value="Ribosomal_uL2_dom3"/>
</dbReference>
<dbReference type="InterPro" id="IPR022666">
    <property type="entry name" value="Ribosomal_uL2_RNA-bd_dom"/>
</dbReference>
<dbReference type="InterPro" id="IPR008991">
    <property type="entry name" value="Translation_prot_SH3-like_sf"/>
</dbReference>
<dbReference type="NCBIfam" id="TIGR01171">
    <property type="entry name" value="rplB_bact"/>
    <property type="match status" value="1"/>
</dbReference>
<dbReference type="PANTHER" id="PTHR13691:SF5">
    <property type="entry name" value="LARGE RIBOSOMAL SUBUNIT PROTEIN UL2M"/>
    <property type="match status" value="1"/>
</dbReference>
<dbReference type="PANTHER" id="PTHR13691">
    <property type="entry name" value="RIBOSOMAL PROTEIN L2"/>
    <property type="match status" value="1"/>
</dbReference>
<dbReference type="Pfam" id="PF00181">
    <property type="entry name" value="Ribosomal_L2"/>
    <property type="match status" value="1"/>
</dbReference>
<dbReference type="Pfam" id="PF03947">
    <property type="entry name" value="Ribosomal_L2_C"/>
    <property type="match status" value="1"/>
</dbReference>
<dbReference type="PIRSF" id="PIRSF002158">
    <property type="entry name" value="Ribosomal_L2"/>
    <property type="match status" value="1"/>
</dbReference>
<dbReference type="SMART" id="SM01383">
    <property type="entry name" value="Ribosomal_L2"/>
    <property type="match status" value="1"/>
</dbReference>
<dbReference type="SMART" id="SM01382">
    <property type="entry name" value="Ribosomal_L2_C"/>
    <property type="match status" value="1"/>
</dbReference>
<dbReference type="SUPFAM" id="SSF50249">
    <property type="entry name" value="Nucleic acid-binding proteins"/>
    <property type="match status" value="1"/>
</dbReference>
<dbReference type="SUPFAM" id="SSF50104">
    <property type="entry name" value="Translation proteins SH3-like domain"/>
    <property type="match status" value="1"/>
</dbReference>
<dbReference type="PROSITE" id="PS00467">
    <property type="entry name" value="RIBOSOMAL_L2"/>
    <property type="match status" value="1"/>
</dbReference>
<reference key="1">
    <citation type="journal article" date="2006" name="BMC Biol.">
        <title>The complete chloroplast DNA sequence of the green alga Oltmannsiellopsis viridis reveals a distinctive quadripartite architecture in the chloroplast genome of early diverging ulvophytes.</title>
        <authorList>
            <person name="Pombert J.-F."/>
            <person name="Lemieux C."/>
            <person name="Turmel M."/>
        </authorList>
    </citation>
    <scope>NUCLEOTIDE SEQUENCE [LARGE SCALE GENOMIC DNA]</scope>
</reference>
<comment type="subunit">
    <text evidence="1">Part of the 50S ribosomal subunit.</text>
</comment>
<comment type="subcellular location">
    <subcellularLocation>
        <location>Plastid</location>
        <location>Chloroplast</location>
    </subcellularLocation>
</comment>
<comment type="similarity">
    <text evidence="4">Belongs to the universal ribosomal protein uL2 family.</text>
</comment>
<organism>
    <name type="scientific">Oltmannsiellopsis viridis</name>
    <name type="common">Marine flagellate</name>
    <name type="synonym">Oltmannsiella viridis</name>
    <dbReference type="NCBI Taxonomy" id="51324"/>
    <lineage>
        <taxon>Eukaryota</taxon>
        <taxon>Viridiplantae</taxon>
        <taxon>Chlorophyta</taxon>
        <taxon>Ulvophyceae</taxon>
        <taxon>Oltmannsiellopsidales</taxon>
        <taxon>Oltmannsiellopsidaceae</taxon>
        <taxon>Oltmannsiellopsis</taxon>
    </lineage>
</organism>